<reference key="1">
    <citation type="journal article" date="1989" name="J. Bacteriol.">
        <title>Genes downstream from pucB and pucA are essential for formation of the B800-850 complex of Rhodobacter capsulatus.</title>
        <authorList>
            <person name="Tichy H.V."/>
            <person name="Oberle B."/>
            <person name="Stiehle H."/>
            <person name="Schiltz E."/>
            <person name="Drews G."/>
        </authorList>
    </citation>
    <scope>NUCLEOTIDE SEQUENCE [GENOMIC DNA]</scope>
</reference>
<keyword id="KW-0042">Antenna complex</keyword>
<accession>P23461</accession>
<name>PUCD_RHOCA</name>
<sequence>MTTVITRLYADEKTACDIARQLKSEGIPKRALKVVVADGKKGAALAEALKSAGVHPSAAAGYAERVAGGLPLVAKVNYKPLGAAKLVRAITARARWSRSRTQPKSSPVRTHLK</sequence>
<organism>
    <name type="scientific">Rhodobacter capsulatus</name>
    <name type="common">Rhodopseudomonas capsulata</name>
    <dbReference type="NCBI Taxonomy" id="1061"/>
    <lineage>
        <taxon>Bacteria</taxon>
        <taxon>Pseudomonadati</taxon>
        <taxon>Pseudomonadota</taxon>
        <taxon>Alphaproteobacteria</taxon>
        <taxon>Rhodobacterales</taxon>
        <taxon>Rhodobacter group</taxon>
        <taxon>Rhodobacter</taxon>
    </lineage>
</organism>
<proteinExistence type="predicted"/>
<feature type="chain" id="PRO_0000099843" description="Protein PucD">
    <location>
        <begin position="1"/>
        <end position="113"/>
    </location>
</feature>
<protein>
    <recommendedName>
        <fullName>Protein PucD</fullName>
    </recommendedName>
</protein>
<comment type="function">
    <text>Seems to be required for the LH-II stabilization.</text>
</comment>
<gene>
    <name type="primary">pucD</name>
</gene>
<dbReference type="EMBL" id="M28510">
    <property type="protein sequence ID" value="AAA26164.1"/>
    <property type="molecule type" value="Genomic_DNA"/>
</dbReference>
<dbReference type="PIR" id="D33958">
    <property type="entry name" value="D33958"/>
</dbReference>
<dbReference type="GO" id="GO:0030076">
    <property type="term" value="C:light-harvesting complex"/>
    <property type="evidence" value="ECO:0007669"/>
    <property type="project" value="UniProtKB-KW"/>
</dbReference>